<dbReference type="EMBL" id="CP000097">
    <property type="protein sequence ID" value="ABB25110.1"/>
    <property type="molecule type" value="Genomic_DNA"/>
</dbReference>
<dbReference type="RefSeq" id="WP_011358977.1">
    <property type="nucleotide sequence ID" value="NC_007513.1"/>
</dbReference>
<dbReference type="SMR" id="Q3B0L8"/>
<dbReference type="STRING" id="316279.Syncc9902_0135"/>
<dbReference type="KEGG" id="sye:Syncc9902_0135"/>
<dbReference type="eggNOG" id="COG0239">
    <property type="taxonomic scope" value="Bacteria"/>
</dbReference>
<dbReference type="HOGENOM" id="CLU_114342_2_3_3"/>
<dbReference type="OrthoDB" id="560684at2"/>
<dbReference type="Proteomes" id="UP000002712">
    <property type="component" value="Chromosome"/>
</dbReference>
<dbReference type="GO" id="GO:0005886">
    <property type="term" value="C:plasma membrane"/>
    <property type="evidence" value="ECO:0007669"/>
    <property type="project" value="UniProtKB-SubCell"/>
</dbReference>
<dbReference type="GO" id="GO:0062054">
    <property type="term" value="F:fluoride channel activity"/>
    <property type="evidence" value="ECO:0007669"/>
    <property type="project" value="UniProtKB-UniRule"/>
</dbReference>
<dbReference type="GO" id="GO:0046872">
    <property type="term" value="F:metal ion binding"/>
    <property type="evidence" value="ECO:0007669"/>
    <property type="project" value="UniProtKB-KW"/>
</dbReference>
<dbReference type="GO" id="GO:0140114">
    <property type="term" value="P:cellular detoxification of fluoride"/>
    <property type="evidence" value="ECO:0007669"/>
    <property type="project" value="UniProtKB-UniRule"/>
</dbReference>
<dbReference type="HAMAP" id="MF_00454">
    <property type="entry name" value="FluC"/>
    <property type="match status" value="1"/>
</dbReference>
<dbReference type="InterPro" id="IPR003691">
    <property type="entry name" value="FluC"/>
</dbReference>
<dbReference type="PANTHER" id="PTHR28259">
    <property type="entry name" value="FLUORIDE EXPORT PROTEIN 1-RELATED"/>
    <property type="match status" value="1"/>
</dbReference>
<dbReference type="PANTHER" id="PTHR28259:SF1">
    <property type="entry name" value="FLUORIDE EXPORT PROTEIN 1-RELATED"/>
    <property type="match status" value="1"/>
</dbReference>
<dbReference type="Pfam" id="PF02537">
    <property type="entry name" value="CRCB"/>
    <property type="match status" value="1"/>
</dbReference>
<feature type="chain" id="PRO_0000252952" description="Fluoride-specific ion channel FluC 1">
    <location>
        <begin position="1"/>
        <end position="126"/>
    </location>
</feature>
<feature type="transmembrane region" description="Helical" evidence="1">
    <location>
        <begin position="1"/>
        <end position="21"/>
    </location>
</feature>
<feature type="transmembrane region" description="Helical" evidence="1">
    <location>
        <begin position="38"/>
        <end position="58"/>
    </location>
</feature>
<feature type="transmembrane region" description="Helical" evidence="1">
    <location>
        <begin position="67"/>
        <end position="87"/>
    </location>
</feature>
<feature type="transmembrane region" description="Helical" evidence="1">
    <location>
        <begin position="99"/>
        <end position="119"/>
    </location>
</feature>
<feature type="binding site" evidence="1">
    <location>
        <position position="77"/>
    </location>
    <ligand>
        <name>Na(+)</name>
        <dbReference type="ChEBI" id="CHEBI:29101"/>
        <note>structural</note>
    </ligand>
</feature>
<feature type="binding site" evidence="1">
    <location>
        <position position="80"/>
    </location>
    <ligand>
        <name>Na(+)</name>
        <dbReference type="ChEBI" id="CHEBI:29101"/>
        <note>structural</note>
    </ligand>
</feature>
<protein>
    <recommendedName>
        <fullName evidence="1">Fluoride-specific ion channel FluC 1</fullName>
    </recommendedName>
</protein>
<keyword id="KW-0997">Cell inner membrane</keyword>
<keyword id="KW-1003">Cell membrane</keyword>
<keyword id="KW-0407">Ion channel</keyword>
<keyword id="KW-0406">Ion transport</keyword>
<keyword id="KW-0472">Membrane</keyword>
<keyword id="KW-0479">Metal-binding</keyword>
<keyword id="KW-1185">Reference proteome</keyword>
<keyword id="KW-0915">Sodium</keyword>
<keyword id="KW-0812">Transmembrane</keyword>
<keyword id="KW-1133">Transmembrane helix</keyword>
<keyword id="KW-0813">Transport</keyword>
<gene>
    <name evidence="1" type="primary">fluC1</name>
    <name evidence="1" type="synonym">crcB1</name>
    <name type="ordered locus">Syncc9902_0135</name>
</gene>
<sequence>MAGSALEALLVGIGAIPGAWLRLKAVNHFEPMVPKKHWGTFAVNVIACFGLGLVLALYQSCSAKTGLALLIGVGFFGSLSTFSTFAVELLNELRAGRPFVSLVLALASIAAGLCAAGVGYGLGAYG</sequence>
<organism>
    <name type="scientific">Synechococcus sp. (strain CC9902)</name>
    <dbReference type="NCBI Taxonomy" id="316279"/>
    <lineage>
        <taxon>Bacteria</taxon>
        <taxon>Bacillati</taxon>
        <taxon>Cyanobacteriota</taxon>
        <taxon>Cyanophyceae</taxon>
        <taxon>Synechococcales</taxon>
        <taxon>Synechococcaceae</taxon>
        <taxon>Synechococcus</taxon>
    </lineage>
</organism>
<reference key="1">
    <citation type="submission" date="2005-08" db="EMBL/GenBank/DDBJ databases">
        <title>Complete sequence of Synechococcus sp. CC9902.</title>
        <authorList>
            <person name="Copeland A."/>
            <person name="Lucas S."/>
            <person name="Lapidus A."/>
            <person name="Barry K."/>
            <person name="Detter J.C."/>
            <person name="Glavina T."/>
            <person name="Hammon N."/>
            <person name="Israni S."/>
            <person name="Pitluck S."/>
            <person name="Martinez M."/>
            <person name="Schmutz J."/>
            <person name="Larimer F."/>
            <person name="Land M."/>
            <person name="Kyrpides N."/>
            <person name="Ivanova N."/>
            <person name="Richardson P."/>
        </authorList>
    </citation>
    <scope>NUCLEOTIDE SEQUENCE [LARGE SCALE GENOMIC DNA]</scope>
    <source>
        <strain>CC9902</strain>
    </source>
</reference>
<evidence type="ECO:0000255" key="1">
    <source>
        <dbReference type="HAMAP-Rule" id="MF_00454"/>
    </source>
</evidence>
<name>FLUC1_SYNS9</name>
<accession>Q3B0L8</accession>
<comment type="function">
    <text evidence="1">Fluoride-specific ion channel. Important for reducing fluoride concentration in the cell, thus reducing its toxicity.</text>
</comment>
<comment type="catalytic activity">
    <reaction evidence="1">
        <text>fluoride(in) = fluoride(out)</text>
        <dbReference type="Rhea" id="RHEA:76159"/>
        <dbReference type="ChEBI" id="CHEBI:17051"/>
    </reaction>
    <physiologicalReaction direction="left-to-right" evidence="1">
        <dbReference type="Rhea" id="RHEA:76160"/>
    </physiologicalReaction>
</comment>
<comment type="activity regulation">
    <text evidence="1">Na(+) is not transported, but it plays an essential structural role and its presence is essential for fluoride channel function.</text>
</comment>
<comment type="subcellular location">
    <subcellularLocation>
        <location evidence="1">Cell inner membrane</location>
        <topology evidence="1">Multi-pass membrane protein</topology>
    </subcellularLocation>
</comment>
<comment type="similarity">
    <text evidence="1">Belongs to the fluoride channel Fluc/FEX (TC 1.A.43) family.</text>
</comment>
<proteinExistence type="inferred from homology"/>